<dbReference type="EC" id="2.7.2.11" evidence="1"/>
<dbReference type="EMBL" id="CP001213">
    <property type="protein sequence ID" value="ACL28593.1"/>
    <property type="molecule type" value="Genomic_DNA"/>
</dbReference>
<dbReference type="RefSeq" id="WP_004268428.1">
    <property type="nucleotide sequence ID" value="NC_011835.1"/>
</dbReference>
<dbReference type="SMR" id="B8DVU2"/>
<dbReference type="STRING" id="442563.BLA_0291"/>
<dbReference type="GeneID" id="29695457"/>
<dbReference type="KEGG" id="bla:BLA_0291"/>
<dbReference type="PATRIC" id="fig|442563.4.peg.311"/>
<dbReference type="HOGENOM" id="CLU_025400_2_0_11"/>
<dbReference type="UniPathway" id="UPA00098">
    <property type="reaction ID" value="UER00359"/>
</dbReference>
<dbReference type="Proteomes" id="UP000002456">
    <property type="component" value="Chromosome"/>
</dbReference>
<dbReference type="GO" id="GO:0005829">
    <property type="term" value="C:cytosol"/>
    <property type="evidence" value="ECO:0007669"/>
    <property type="project" value="TreeGrafter"/>
</dbReference>
<dbReference type="GO" id="GO:0005524">
    <property type="term" value="F:ATP binding"/>
    <property type="evidence" value="ECO:0007669"/>
    <property type="project" value="UniProtKB-KW"/>
</dbReference>
<dbReference type="GO" id="GO:0004349">
    <property type="term" value="F:glutamate 5-kinase activity"/>
    <property type="evidence" value="ECO:0007669"/>
    <property type="project" value="UniProtKB-UniRule"/>
</dbReference>
<dbReference type="GO" id="GO:0003723">
    <property type="term" value="F:RNA binding"/>
    <property type="evidence" value="ECO:0007669"/>
    <property type="project" value="InterPro"/>
</dbReference>
<dbReference type="GO" id="GO:0055129">
    <property type="term" value="P:L-proline biosynthetic process"/>
    <property type="evidence" value="ECO:0007669"/>
    <property type="project" value="UniProtKB-UniRule"/>
</dbReference>
<dbReference type="CDD" id="cd04242">
    <property type="entry name" value="AAK_G5K_ProB"/>
    <property type="match status" value="1"/>
</dbReference>
<dbReference type="CDD" id="cd21157">
    <property type="entry name" value="PUA_G5K"/>
    <property type="match status" value="1"/>
</dbReference>
<dbReference type="FunFam" id="3.40.1160.10:FF:000018">
    <property type="entry name" value="Glutamate 5-kinase"/>
    <property type="match status" value="1"/>
</dbReference>
<dbReference type="Gene3D" id="3.40.1160.10">
    <property type="entry name" value="Acetylglutamate kinase-like"/>
    <property type="match status" value="1"/>
</dbReference>
<dbReference type="Gene3D" id="2.30.130.10">
    <property type="entry name" value="PUA domain"/>
    <property type="match status" value="1"/>
</dbReference>
<dbReference type="HAMAP" id="MF_00456">
    <property type="entry name" value="ProB"/>
    <property type="match status" value="1"/>
</dbReference>
<dbReference type="InterPro" id="IPR036393">
    <property type="entry name" value="AceGlu_kinase-like_sf"/>
</dbReference>
<dbReference type="InterPro" id="IPR001048">
    <property type="entry name" value="Asp/Glu/Uridylate_kinase"/>
</dbReference>
<dbReference type="InterPro" id="IPR041739">
    <property type="entry name" value="G5K_ProB"/>
</dbReference>
<dbReference type="InterPro" id="IPR001057">
    <property type="entry name" value="Glu/AcGlu_kinase"/>
</dbReference>
<dbReference type="InterPro" id="IPR011529">
    <property type="entry name" value="Glu_5kinase"/>
</dbReference>
<dbReference type="InterPro" id="IPR005715">
    <property type="entry name" value="Glu_5kinase/COase_Synthase"/>
</dbReference>
<dbReference type="InterPro" id="IPR019797">
    <property type="entry name" value="Glutamate_5-kinase_CS"/>
</dbReference>
<dbReference type="InterPro" id="IPR002478">
    <property type="entry name" value="PUA"/>
</dbReference>
<dbReference type="InterPro" id="IPR015947">
    <property type="entry name" value="PUA-like_sf"/>
</dbReference>
<dbReference type="InterPro" id="IPR036974">
    <property type="entry name" value="PUA_sf"/>
</dbReference>
<dbReference type="NCBIfam" id="TIGR01027">
    <property type="entry name" value="proB"/>
    <property type="match status" value="1"/>
</dbReference>
<dbReference type="PANTHER" id="PTHR43654">
    <property type="entry name" value="GLUTAMATE 5-KINASE"/>
    <property type="match status" value="1"/>
</dbReference>
<dbReference type="PANTHER" id="PTHR43654:SF1">
    <property type="entry name" value="ISOPENTENYL PHOSPHATE KINASE"/>
    <property type="match status" value="1"/>
</dbReference>
<dbReference type="Pfam" id="PF00696">
    <property type="entry name" value="AA_kinase"/>
    <property type="match status" value="1"/>
</dbReference>
<dbReference type="Pfam" id="PF01472">
    <property type="entry name" value="PUA"/>
    <property type="match status" value="1"/>
</dbReference>
<dbReference type="PIRSF" id="PIRSF000729">
    <property type="entry name" value="GK"/>
    <property type="match status" value="1"/>
</dbReference>
<dbReference type="PRINTS" id="PR00474">
    <property type="entry name" value="GLU5KINASE"/>
</dbReference>
<dbReference type="SMART" id="SM00359">
    <property type="entry name" value="PUA"/>
    <property type="match status" value="1"/>
</dbReference>
<dbReference type="SUPFAM" id="SSF53633">
    <property type="entry name" value="Carbamate kinase-like"/>
    <property type="match status" value="1"/>
</dbReference>
<dbReference type="SUPFAM" id="SSF88697">
    <property type="entry name" value="PUA domain-like"/>
    <property type="match status" value="1"/>
</dbReference>
<dbReference type="PROSITE" id="PS00902">
    <property type="entry name" value="GLUTAMATE_5_KINASE"/>
    <property type="match status" value="1"/>
</dbReference>
<dbReference type="PROSITE" id="PS50890">
    <property type="entry name" value="PUA"/>
    <property type="match status" value="1"/>
</dbReference>
<proteinExistence type="inferred from homology"/>
<gene>
    <name evidence="1" type="primary">proB</name>
    <name type="ordered locus">BLA_0291</name>
</gene>
<name>PROB_BIFA0</name>
<reference key="1">
    <citation type="journal article" date="2009" name="J. Bacteriol.">
        <title>Genome sequence of the probiotic bacterium Bifidobacterium animalis subsp. lactis AD011.</title>
        <authorList>
            <person name="Kim J.F."/>
            <person name="Jeong H."/>
            <person name="Yu D.S."/>
            <person name="Choi S.-H."/>
            <person name="Hur C.-G."/>
            <person name="Park M.-S."/>
            <person name="Yoon S.H."/>
            <person name="Kim D.-W."/>
            <person name="Ji G.E."/>
            <person name="Park H.-S."/>
            <person name="Oh T.K."/>
        </authorList>
    </citation>
    <scope>NUCLEOTIDE SEQUENCE [LARGE SCALE GENOMIC DNA]</scope>
    <source>
        <strain>AD011</strain>
    </source>
</reference>
<keyword id="KW-0028">Amino-acid biosynthesis</keyword>
<keyword id="KW-0067">ATP-binding</keyword>
<keyword id="KW-0963">Cytoplasm</keyword>
<keyword id="KW-0418">Kinase</keyword>
<keyword id="KW-0547">Nucleotide-binding</keyword>
<keyword id="KW-0641">Proline biosynthesis</keyword>
<keyword id="KW-1185">Reference proteome</keyword>
<keyword id="KW-0808">Transferase</keyword>
<sequence>MQTPSQEEVRRAVAAARTVVVKVGSSSLTQPSGHLDVDKLNALVGAIAQVRMLGGNIVLVSSGAIAAGFGPLGFESRPTDVATQQATASVGQGLLMAQYEMAFGRYGIRVGQLLITAEDTMQPRQYRNARRTMAKLLELGVVPIVNENDALASNEIRFGDNDRLSALIANMVRADALILLTDVDALYTAPPSEPGSHRIGFVPNITELLDQVRVGGSESGVGTGGMVTKLEAARMAAVSGIPAVLTAARNAGPALMGDEVGTAFAPVKQRGSARRLWIKFAAHPRGVLVADSGAAKAVRGGRASLLAAGVLESRGDFAAGDPVWIDDEAGNHLARGLAGYDSEEIPNMLGRNTAQLRRLLGEEYAHPLVHRDNLVLV</sequence>
<evidence type="ECO:0000255" key="1">
    <source>
        <dbReference type="HAMAP-Rule" id="MF_00456"/>
    </source>
</evidence>
<organism>
    <name type="scientific">Bifidobacterium animalis subsp. lactis (strain AD011)</name>
    <dbReference type="NCBI Taxonomy" id="442563"/>
    <lineage>
        <taxon>Bacteria</taxon>
        <taxon>Bacillati</taxon>
        <taxon>Actinomycetota</taxon>
        <taxon>Actinomycetes</taxon>
        <taxon>Bifidobacteriales</taxon>
        <taxon>Bifidobacteriaceae</taxon>
        <taxon>Bifidobacterium</taxon>
    </lineage>
</organism>
<comment type="function">
    <text evidence="1">Catalyzes the transfer of a phosphate group to glutamate to form L-glutamate 5-phosphate.</text>
</comment>
<comment type="catalytic activity">
    <reaction evidence="1">
        <text>L-glutamate + ATP = L-glutamyl 5-phosphate + ADP</text>
        <dbReference type="Rhea" id="RHEA:14877"/>
        <dbReference type="ChEBI" id="CHEBI:29985"/>
        <dbReference type="ChEBI" id="CHEBI:30616"/>
        <dbReference type="ChEBI" id="CHEBI:58274"/>
        <dbReference type="ChEBI" id="CHEBI:456216"/>
        <dbReference type="EC" id="2.7.2.11"/>
    </reaction>
</comment>
<comment type="pathway">
    <text evidence="1">Amino-acid biosynthesis; L-proline biosynthesis; L-glutamate 5-semialdehyde from L-glutamate: step 1/2.</text>
</comment>
<comment type="subcellular location">
    <subcellularLocation>
        <location evidence="1">Cytoplasm</location>
    </subcellularLocation>
</comment>
<comment type="similarity">
    <text evidence="1">Belongs to the glutamate 5-kinase family.</text>
</comment>
<accession>B8DVU2</accession>
<protein>
    <recommendedName>
        <fullName evidence="1">Glutamate 5-kinase</fullName>
        <ecNumber evidence="1">2.7.2.11</ecNumber>
    </recommendedName>
    <alternativeName>
        <fullName evidence="1">Gamma-glutamyl kinase</fullName>
        <shortName evidence="1">GK</shortName>
    </alternativeName>
</protein>
<feature type="chain" id="PRO_1000193687" description="Glutamate 5-kinase">
    <location>
        <begin position="1"/>
        <end position="377"/>
    </location>
</feature>
<feature type="domain" description="PUA" evidence="1">
    <location>
        <begin position="285"/>
        <end position="363"/>
    </location>
</feature>
<feature type="binding site" evidence="1">
    <location>
        <position position="22"/>
    </location>
    <ligand>
        <name>ATP</name>
        <dbReference type="ChEBI" id="CHEBI:30616"/>
    </ligand>
</feature>
<feature type="binding site" evidence="1">
    <location>
        <position position="62"/>
    </location>
    <ligand>
        <name>substrate</name>
    </ligand>
</feature>
<feature type="binding site" evidence="1">
    <location>
        <position position="149"/>
    </location>
    <ligand>
        <name>substrate</name>
    </ligand>
</feature>
<feature type="binding site" evidence="1">
    <location>
        <position position="161"/>
    </location>
    <ligand>
        <name>substrate</name>
    </ligand>
</feature>
<feature type="binding site" evidence="1">
    <location>
        <begin position="181"/>
        <end position="182"/>
    </location>
    <ligand>
        <name>ATP</name>
        <dbReference type="ChEBI" id="CHEBI:30616"/>
    </ligand>
</feature>
<feature type="binding site" evidence="1">
    <location>
        <begin position="223"/>
        <end position="229"/>
    </location>
    <ligand>
        <name>ATP</name>
        <dbReference type="ChEBI" id="CHEBI:30616"/>
    </ligand>
</feature>